<dbReference type="EC" id="5.4.99.62" evidence="1"/>
<dbReference type="EMBL" id="CP000436">
    <property type="protein sequence ID" value="ABI24501.1"/>
    <property type="molecule type" value="Genomic_DNA"/>
</dbReference>
<dbReference type="SMR" id="Q0I1S1"/>
<dbReference type="KEGG" id="hso:HS_0223"/>
<dbReference type="eggNOG" id="COG1869">
    <property type="taxonomic scope" value="Bacteria"/>
</dbReference>
<dbReference type="HOGENOM" id="CLU_135498_0_0_6"/>
<dbReference type="UniPathway" id="UPA00916">
    <property type="reaction ID" value="UER00888"/>
</dbReference>
<dbReference type="GO" id="GO:0005829">
    <property type="term" value="C:cytosol"/>
    <property type="evidence" value="ECO:0007669"/>
    <property type="project" value="TreeGrafter"/>
</dbReference>
<dbReference type="GO" id="GO:0062193">
    <property type="term" value="F:D-ribose pyranase activity"/>
    <property type="evidence" value="ECO:0007669"/>
    <property type="project" value="UniProtKB-EC"/>
</dbReference>
<dbReference type="GO" id="GO:0016872">
    <property type="term" value="F:intramolecular lyase activity"/>
    <property type="evidence" value="ECO:0007669"/>
    <property type="project" value="UniProtKB-UniRule"/>
</dbReference>
<dbReference type="GO" id="GO:0048029">
    <property type="term" value="F:monosaccharide binding"/>
    <property type="evidence" value="ECO:0007669"/>
    <property type="project" value="InterPro"/>
</dbReference>
<dbReference type="GO" id="GO:0019303">
    <property type="term" value="P:D-ribose catabolic process"/>
    <property type="evidence" value="ECO:0007669"/>
    <property type="project" value="UniProtKB-UniRule"/>
</dbReference>
<dbReference type="Gene3D" id="3.40.1650.10">
    <property type="entry name" value="RbsD-like domain"/>
    <property type="match status" value="1"/>
</dbReference>
<dbReference type="HAMAP" id="MF_01661">
    <property type="entry name" value="D_rib_pyranase"/>
    <property type="match status" value="1"/>
</dbReference>
<dbReference type="InterPro" id="IPR023064">
    <property type="entry name" value="D-ribose_pyranase"/>
</dbReference>
<dbReference type="InterPro" id="IPR023750">
    <property type="entry name" value="RbsD-like_sf"/>
</dbReference>
<dbReference type="InterPro" id="IPR007721">
    <property type="entry name" value="RbsD_FucU"/>
</dbReference>
<dbReference type="NCBIfam" id="NF008761">
    <property type="entry name" value="PRK11797.1"/>
    <property type="match status" value="1"/>
</dbReference>
<dbReference type="PANTHER" id="PTHR37831">
    <property type="entry name" value="D-RIBOSE PYRANASE"/>
    <property type="match status" value="1"/>
</dbReference>
<dbReference type="PANTHER" id="PTHR37831:SF1">
    <property type="entry name" value="D-RIBOSE PYRANASE"/>
    <property type="match status" value="1"/>
</dbReference>
<dbReference type="Pfam" id="PF05025">
    <property type="entry name" value="RbsD_FucU"/>
    <property type="match status" value="1"/>
</dbReference>
<dbReference type="SUPFAM" id="SSF102546">
    <property type="entry name" value="RbsD-like"/>
    <property type="match status" value="1"/>
</dbReference>
<reference key="1">
    <citation type="journal article" date="2007" name="J. Bacteriol.">
        <title>Complete genome sequence of Haemophilus somnus (Histophilus somni) strain 129Pt and comparison to Haemophilus ducreyi 35000HP and Haemophilus influenzae Rd.</title>
        <authorList>
            <person name="Challacombe J.F."/>
            <person name="Duncan A.J."/>
            <person name="Brettin T.S."/>
            <person name="Bruce D."/>
            <person name="Chertkov O."/>
            <person name="Detter J.C."/>
            <person name="Han C.S."/>
            <person name="Misra M."/>
            <person name="Richardson P."/>
            <person name="Tapia R."/>
            <person name="Thayer N."/>
            <person name="Xie G."/>
            <person name="Inzana T.J."/>
        </authorList>
    </citation>
    <scope>NUCLEOTIDE SEQUENCE [LARGE SCALE GENOMIC DNA]</scope>
    <source>
        <strain>129Pt</strain>
    </source>
</reference>
<feature type="chain" id="PRO_0000346211" description="D-ribose pyranase">
    <location>
        <begin position="1"/>
        <end position="139"/>
    </location>
</feature>
<feature type="active site" description="Proton donor" evidence="1">
    <location>
        <position position="20"/>
    </location>
</feature>
<feature type="binding site" evidence="1">
    <location>
        <position position="28"/>
    </location>
    <ligand>
        <name>substrate</name>
    </ligand>
</feature>
<feature type="binding site" evidence="1">
    <location>
        <position position="106"/>
    </location>
    <ligand>
        <name>substrate</name>
    </ligand>
</feature>
<feature type="binding site" evidence="1">
    <location>
        <begin position="128"/>
        <end position="130"/>
    </location>
    <ligand>
        <name>substrate</name>
    </ligand>
</feature>
<name>RBSD_HISS1</name>
<protein>
    <recommendedName>
        <fullName evidence="1">D-ribose pyranase</fullName>
        <ecNumber evidence="1">5.4.99.62</ecNumber>
    </recommendedName>
</protein>
<evidence type="ECO:0000255" key="1">
    <source>
        <dbReference type="HAMAP-Rule" id="MF_01661"/>
    </source>
</evidence>
<sequence length="139" mass="15260">MKKTKLLNASLSHHIATLGHTESLVICDAGLPISNQVERIDLALEAGVPGFLQTVDVVISEMFVEHAVVAKEIREKNPQIHDALLDSLRKLSEQQGNCIAVEYVEHEEFKVLSSESKVAVCTGEFSPYANIILYSGVPF</sequence>
<organism>
    <name type="scientific">Histophilus somni (strain 129Pt)</name>
    <name type="common">Haemophilus somnus</name>
    <dbReference type="NCBI Taxonomy" id="205914"/>
    <lineage>
        <taxon>Bacteria</taxon>
        <taxon>Pseudomonadati</taxon>
        <taxon>Pseudomonadota</taxon>
        <taxon>Gammaproteobacteria</taxon>
        <taxon>Pasteurellales</taxon>
        <taxon>Pasteurellaceae</taxon>
        <taxon>Histophilus</taxon>
    </lineage>
</organism>
<gene>
    <name evidence="1" type="primary">rbsD</name>
    <name type="ordered locus">HS_0223</name>
</gene>
<accession>Q0I1S1</accession>
<proteinExistence type="inferred from homology"/>
<comment type="function">
    <text evidence="1">Catalyzes the interconversion of beta-pyran and beta-furan forms of D-ribose.</text>
</comment>
<comment type="catalytic activity">
    <reaction evidence="1">
        <text>beta-D-ribopyranose = beta-D-ribofuranose</text>
        <dbReference type="Rhea" id="RHEA:25432"/>
        <dbReference type="ChEBI" id="CHEBI:27476"/>
        <dbReference type="ChEBI" id="CHEBI:47002"/>
        <dbReference type="EC" id="5.4.99.62"/>
    </reaction>
</comment>
<comment type="pathway">
    <text evidence="1">Carbohydrate metabolism; D-ribose degradation; D-ribose 5-phosphate from beta-D-ribopyranose: step 1/2.</text>
</comment>
<comment type="subunit">
    <text evidence="1">Homodecamer.</text>
</comment>
<comment type="subcellular location">
    <subcellularLocation>
        <location evidence="1">Cytoplasm</location>
    </subcellularLocation>
</comment>
<comment type="similarity">
    <text evidence="1">Belongs to the RbsD / FucU family. RbsD subfamily.</text>
</comment>
<keyword id="KW-0119">Carbohydrate metabolism</keyword>
<keyword id="KW-0963">Cytoplasm</keyword>
<keyword id="KW-0413">Isomerase</keyword>